<evidence type="ECO:0000250" key="1">
    <source>
        <dbReference type="UniProtKB" id="P03923"/>
    </source>
</evidence>
<evidence type="ECO:0000250" key="2">
    <source>
        <dbReference type="UniProtKB" id="P03924"/>
    </source>
</evidence>
<evidence type="ECO:0000255" key="3"/>
<evidence type="ECO:0000305" key="4"/>
<protein>
    <recommendedName>
        <fullName>NADH-ubiquinone oxidoreductase chain 6</fullName>
        <ecNumber evidence="1">7.1.1.2</ecNumber>
    </recommendedName>
    <alternativeName>
        <fullName>NADH dehydrogenase subunit 6</fullName>
    </alternativeName>
</protein>
<sequence length="174" mass="18775">MTYVLFTLSVMLVMGFVGFSSKPSPIYGGLALVVSGVVGCMIILNYGGAYLGLVMFLIYLGGMMVVFGYTAAMAIEEYPETWGSGFEVLACFLVGLMMEVGLVLWVLDFDEVVVMVGFNDMGNWVVFEGEGSGLVRSDSIGAGALYDYGRWLVVVAGWTLFVGVYVVIEITRGN</sequence>
<name>NU6M_PAPHA</name>
<proteinExistence type="inferred from homology"/>
<accession>Q9ZXX5</accession>
<geneLocation type="mitochondrion"/>
<keyword id="KW-0249">Electron transport</keyword>
<keyword id="KW-0472">Membrane</keyword>
<keyword id="KW-0496">Mitochondrion</keyword>
<keyword id="KW-0999">Mitochondrion inner membrane</keyword>
<keyword id="KW-0520">NAD</keyword>
<keyword id="KW-0679">Respiratory chain</keyword>
<keyword id="KW-1278">Translocase</keyword>
<keyword id="KW-0812">Transmembrane</keyword>
<keyword id="KW-1133">Transmembrane helix</keyword>
<keyword id="KW-0813">Transport</keyword>
<keyword id="KW-0830">Ubiquinone</keyword>
<gene>
    <name type="primary">MT-ND6</name>
    <name type="synonym">MTND6</name>
    <name type="synonym">NADH6</name>
    <name type="synonym">ND6</name>
</gene>
<reference key="1">
    <citation type="journal article" date="1998" name="J. Mol. Evol.">
        <title>Molecular timing of primate divergences as estimated by two nonprimate calibration points.</title>
        <authorList>
            <person name="Arnason U."/>
            <person name="Gullberg A."/>
            <person name="Janke A."/>
        </authorList>
    </citation>
    <scope>NUCLEOTIDE SEQUENCE [GENOMIC DNA]</scope>
</reference>
<feature type="chain" id="PRO_0000118311" description="NADH-ubiquinone oxidoreductase chain 6">
    <location>
        <begin position="1"/>
        <end position="174"/>
    </location>
</feature>
<feature type="transmembrane region" description="Helical" evidence="3">
    <location>
        <begin position="1"/>
        <end position="21"/>
    </location>
</feature>
<feature type="transmembrane region" description="Helical" evidence="3">
    <location>
        <begin position="24"/>
        <end position="44"/>
    </location>
</feature>
<feature type="transmembrane region" description="Helical" evidence="3">
    <location>
        <begin position="47"/>
        <end position="67"/>
    </location>
</feature>
<feature type="transmembrane region" description="Helical" evidence="3">
    <location>
        <begin position="86"/>
        <end position="106"/>
    </location>
</feature>
<feature type="transmembrane region" description="Helical" evidence="3">
    <location>
        <begin position="151"/>
        <end position="171"/>
    </location>
</feature>
<organism>
    <name type="scientific">Papio hamadryas</name>
    <name type="common">Hamadryas baboon</name>
    <dbReference type="NCBI Taxonomy" id="9557"/>
    <lineage>
        <taxon>Eukaryota</taxon>
        <taxon>Metazoa</taxon>
        <taxon>Chordata</taxon>
        <taxon>Craniata</taxon>
        <taxon>Vertebrata</taxon>
        <taxon>Euteleostomi</taxon>
        <taxon>Mammalia</taxon>
        <taxon>Eutheria</taxon>
        <taxon>Euarchontoglires</taxon>
        <taxon>Primates</taxon>
        <taxon>Haplorrhini</taxon>
        <taxon>Catarrhini</taxon>
        <taxon>Cercopithecidae</taxon>
        <taxon>Cercopithecinae</taxon>
        <taxon>Papio</taxon>
    </lineage>
</organism>
<comment type="function">
    <text evidence="1">Core subunit of the mitochondrial membrane respiratory chain NADH dehydrogenase (Complex I) which catalyzes electron transfer from NADH through the respiratory chain, using ubiquinone as an electron acceptor. Essential for the catalytic activity and assembly of complex I.</text>
</comment>
<comment type="catalytic activity">
    <reaction evidence="1">
        <text>a ubiquinone + NADH + 5 H(+)(in) = a ubiquinol + NAD(+) + 4 H(+)(out)</text>
        <dbReference type="Rhea" id="RHEA:29091"/>
        <dbReference type="Rhea" id="RHEA-COMP:9565"/>
        <dbReference type="Rhea" id="RHEA-COMP:9566"/>
        <dbReference type="ChEBI" id="CHEBI:15378"/>
        <dbReference type="ChEBI" id="CHEBI:16389"/>
        <dbReference type="ChEBI" id="CHEBI:17976"/>
        <dbReference type="ChEBI" id="CHEBI:57540"/>
        <dbReference type="ChEBI" id="CHEBI:57945"/>
        <dbReference type="EC" id="7.1.1.2"/>
    </reaction>
</comment>
<comment type="subunit">
    <text evidence="2">Core subunit of respiratory chain NADH dehydrogenase (Complex I) which is composed of 45 different subunits.</text>
</comment>
<comment type="subcellular location">
    <subcellularLocation>
        <location evidence="2">Mitochondrion inner membrane</location>
        <topology evidence="3">Multi-pass membrane protein</topology>
    </subcellularLocation>
</comment>
<comment type="similarity">
    <text evidence="4">Belongs to the complex I subunit 6 family.</text>
</comment>
<dbReference type="EC" id="7.1.1.2" evidence="1"/>
<dbReference type="EMBL" id="Y18001">
    <property type="protein sequence ID" value="CAA77005.1"/>
    <property type="molecule type" value="Genomic_DNA"/>
</dbReference>
<dbReference type="PIR" id="T11517">
    <property type="entry name" value="T11517"/>
</dbReference>
<dbReference type="RefSeq" id="NP_008469.1">
    <property type="nucleotide sequence ID" value="NC_001992.1"/>
</dbReference>
<dbReference type="SMR" id="Q9ZXX5"/>
<dbReference type="GeneID" id="808326"/>
<dbReference type="CTD" id="4541"/>
<dbReference type="GO" id="GO:0005743">
    <property type="term" value="C:mitochondrial inner membrane"/>
    <property type="evidence" value="ECO:0000250"/>
    <property type="project" value="UniProtKB"/>
</dbReference>
<dbReference type="GO" id="GO:0008137">
    <property type="term" value="F:NADH dehydrogenase (ubiquinone) activity"/>
    <property type="evidence" value="ECO:0000250"/>
    <property type="project" value="UniProtKB"/>
</dbReference>
<dbReference type="GO" id="GO:0006120">
    <property type="term" value="P:mitochondrial electron transport, NADH to ubiquinone"/>
    <property type="evidence" value="ECO:0000250"/>
    <property type="project" value="UniProtKB"/>
</dbReference>
<dbReference type="GO" id="GO:0032981">
    <property type="term" value="P:mitochondrial respiratory chain complex I assembly"/>
    <property type="evidence" value="ECO:0000250"/>
    <property type="project" value="UniProtKB"/>
</dbReference>
<dbReference type="InterPro" id="IPR050269">
    <property type="entry name" value="ComplexI_Subunit6"/>
</dbReference>
<dbReference type="InterPro" id="IPR001457">
    <property type="entry name" value="NADH_UbQ/plastoQ_OxRdtase_su6"/>
</dbReference>
<dbReference type="PANTHER" id="PTHR11435">
    <property type="entry name" value="NADH UBIQUINONE OXIDOREDUCTASE SUBUNIT ND6"/>
    <property type="match status" value="1"/>
</dbReference>
<dbReference type="PANTHER" id="PTHR11435:SF1">
    <property type="entry name" value="NADH-UBIQUINONE OXIDOREDUCTASE CHAIN 6"/>
    <property type="match status" value="1"/>
</dbReference>
<dbReference type="Pfam" id="PF00499">
    <property type="entry name" value="Oxidored_q3"/>
    <property type="match status" value="1"/>
</dbReference>